<protein>
    <recommendedName>
        <fullName>Endo-1,4-beta-xylanase B</fullName>
        <shortName>Xylanase B</shortName>
        <ecNumber>3.2.1.8</ecNumber>
    </recommendedName>
    <alternativeName>
        <fullName>1,4-beta-D-xylan xylanohydrolase B</fullName>
    </alternativeName>
    <alternativeName>
        <fullName>24 kDa xylanase</fullName>
    </alternativeName>
    <alternativeName>
        <fullName>Endo-1,4-beta-xylanase G1</fullName>
        <shortName>Xylanase G1</shortName>
    </alternativeName>
    <alternativeName>
        <fullName>Xylanase X24</fullName>
    </alternativeName>
</protein>
<name>XYNB_EMENI</name>
<proteinExistence type="evidence at transcript level"/>
<feature type="signal peptide" evidence="1">
    <location>
        <begin position="1"/>
        <end position="18"/>
    </location>
</feature>
<feature type="chain" id="PRO_0000008005" description="Endo-1,4-beta-xylanase B">
    <location>
        <begin position="19"/>
        <end position="221"/>
    </location>
</feature>
<feature type="domain" description="GH11" evidence="2">
    <location>
        <begin position="33"/>
        <end position="221"/>
    </location>
</feature>
<feature type="active site" description="Nucleophile" evidence="3">
    <location>
        <position position="117"/>
    </location>
</feature>
<feature type="active site" description="Proton donor" evidence="4">
    <location>
        <position position="208"/>
    </location>
</feature>
<feature type="sequence conflict" description="In Ref. 1; CAA90074." evidence="9" ref="1">
    <original>N</original>
    <variation>K</variation>
    <location>
        <position position="73"/>
    </location>
</feature>
<feature type="sequence conflict" description="In Ref. 1; CAA90074." evidence="9" ref="1">
    <original>N</original>
    <variation>I</variation>
    <location>
        <position position="98"/>
    </location>
</feature>
<sequence>MVSFSSLLLACSAVTAFAAPSDQSIAERSLSERSTPSSTGTSGGYYYSFWTDGGGDVTYTNGDGGSYTVEWTNVGNFVGGKGWNPGSSQTISYSGSFNPSGNGYLSVYGWTQNPLIEYYIVESYGDYNPGTAGTHQGTLESDGSTYDIYTATRENAPSIEGTATFTQFWSVRQSKRTSGSVTTQNHFDAWSQLGMTLGTHNYQIVAVEGYQSSGSASITVS</sequence>
<gene>
    <name type="primary">xlnB</name>
    <name type="synonym">xynB</name>
    <name type="synonym">xynG1</name>
    <name type="ORF">AN9365</name>
</gene>
<accession>P55333</accession>
<accession>C8VR70</accession>
<accession>Q00176</accession>
<accession>Q5AQR5</accession>
<reference key="1">
    <citation type="journal article" date="1996" name="Appl. Environ. Microbiol.">
        <title>Molecular cloning and expression in Saccharomyces cerevisiae of two Aspergillus nidulans xylanase genes.</title>
        <authorList>
            <person name="Perez-Gonzalez J.A."/>
            <person name="de Graaff L.H."/>
            <person name="Visser J."/>
            <person name="Ramon D."/>
        </authorList>
    </citation>
    <scope>NUCLEOTIDE SEQUENCE [GENOMIC DNA]</scope>
    <scope>FUNCTION</scope>
    <scope>SUBCELLULAR LOCATION</scope>
</reference>
<reference key="2">
    <citation type="journal article" date="2005" name="Nature">
        <title>Sequencing of Aspergillus nidulans and comparative analysis with A. fumigatus and A. oryzae.</title>
        <authorList>
            <person name="Galagan J.E."/>
            <person name="Calvo S.E."/>
            <person name="Cuomo C."/>
            <person name="Ma L.-J."/>
            <person name="Wortman J.R."/>
            <person name="Batzoglou S."/>
            <person name="Lee S.-I."/>
            <person name="Bastuerkmen M."/>
            <person name="Spevak C.C."/>
            <person name="Clutterbuck J."/>
            <person name="Kapitonov V."/>
            <person name="Jurka J."/>
            <person name="Scazzocchio C."/>
            <person name="Farman M.L."/>
            <person name="Butler J."/>
            <person name="Purcell S."/>
            <person name="Harris S."/>
            <person name="Braus G.H."/>
            <person name="Draht O."/>
            <person name="Busch S."/>
            <person name="D'Enfert C."/>
            <person name="Bouchier C."/>
            <person name="Goldman G.H."/>
            <person name="Bell-Pedersen D."/>
            <person name="Griffiths-Jones S."/>
            <person name="Doonan J.H."/>
            <person name="Yu J."/>
            <person name="Vienken K."/>
            <person name="Pain A."/>
            <person name="Freitag M."/>
            <person name="Selker E.U."/>
            <person name="Archer D.B."/>
            <person name="Penalva M.A."/>
            <person name="Oakley B.R."/>
            <person name="Momany M."/>
            <person name="Tanaka T."/>
            <person name="Kumagai T."/>
            <person name="Asai K."/>
            <person name="Machida M."/>
            <person name="Nierman W.C."/>
            <person name="Denning D.W."/>
            <person name="Caddick M.X."/>
            <person name="Hynes M."/>
            <person name="Paoletti M."/>
            <person name="Fischer R."/>
            <person name="Miller B.L."/>
            <person name="Dyer P.S."/>
            <person name="Sachs M.S."/>
            <person name="Osmani S.A."/>
            <person name="Birren B.W."/>
        </authorList>
    </citation>
    <scope>NUCLEOTIDE SEQUENCE [LARGE SCALE GENOMIC DNA]</scope>
    <source>
        <strain>FGSC A4 / ATCC 38163 / CBS 112.46 / NRRL 194 / M139</strain>
    </source>
</reference>
<reference key="3">
    <citation type="journal article" date="2009" name="Fungal Genet. Biol.">
        <title>The 2008 update of the Aspergillus nidulans genome annotation: a community effort.</title>
        <authorList>
            <person name="Wortman J.R."/>
            <person name="Gilsenan J.M."/>
            <person name="Joardar V."/>
            <person name="Deegan J."/>
            <person name="Clutterbuck J."/>
            <person name="Andersen M.R."/>
            <person name="Archer D."/>
            <person name="Bencina M."/>
            <person name="Braus G."/>
            <person name="Coutinho P."/>
            <person name="von Dohren H."/>
            <person name="Doonan J."/>
            <person name="Driessen A.J."/>
            <person name="Durek P."/>
            <person name="Espeso E."/>
            <person name="Fekete E."/>
            <person name="Flipphi M."/>
            <person name="Estrada C.G."/>
            <person name="Geysens S."/>
            <person name="Goldman G."/>
            <person name="de Groot P.W."/>
            <person name="Hansen K."/>
            <person name="Harris S.D."/>
            <person name="Heinekamp T."/>
            <person name="Helmstaedt K."/>
            <person name="Henrissat B."/>
            <person name="Hofmann G."/>
            <person name="Homan T."/>
            <person name="Horio T."/>
            <person name="Horiuchi H."/>
            <person name="James S."/>
            <person name="Jones M."/>
            <person name="Karaffa L."/>
            <person name="Karanyi Z."/>
            <person name="Kato M."/>
            <person name="Keller N."/>
            <person name="Kelly D.E."/>
            <person name="Kiel J.A."/>
            <person name="Kim J.M."/>
            <person name="van der Klei I.J."/>
            <person name="Klis F.M."/>
            <person name="Kovalchuk A."/>
            <person name="Krasevec N."/>
            <person name="Kubicek C.P."/>
            <person name="Liu B."/>
            <person name="Maccabe A."/>
            <person name="Meyer V."/>
            <person name="Mirabito P."/>
            <person name="Miskei M."/>
            <person name="Mos M."/>
            <person name="Mullins J."/>
            <person name="Nelson D.R."/>
            <person name="Nielsen J."/>
            <person name="Oakley B.R."/>
            <person name="Osmani S.A."/>
            <person name="Pakula T."/>
            <person name="Paszewski A."/>
            <person name="Paulsen I."/>
            <person name="Pilsyk S."/>
            <person name="Pocsi I."/>
            <person name="Punt P.J."/>
            <person name="Ram A.F."/>
            <person name="Ren Q."/>
            <person name="Robellet X."/>
            <person name="Robson G."/>
            <person name="Seiboth B."/>
            <person name="van Solingen P."/>
            <person name="Specht T."/>
            <person name="Sun J."/>
            <person name="Taheri-Talesh N."/>
            <person name="Takeshita N."/>
            <person name="Ussery D."/>
            <person name="vanKuyk P.A."/>
            <person name="Visser H."/>
            <person name="van de Vondervoort P.J."/>
            <person name="de Vries R.P."/>
            <person name="Walton J."/>
            <person name="Xiang X."/>
            <person name="Xiong Y."/>
            <person name="Zeng A.P."/>
            <person name="Brandt B.W."/>
            <person name="Cornell M.J."/>
            <person name="van den Hondel C.A."/>
            <person name="Visser J."/>
            <person name="Oliver S.G."/>
            <person name="Turner G."/>
        </authorList>
    </citation>
    <scope>GENOME REANNOTATION</scope>
    <source>
        <strain>FGSC A4 / ATCC 38163 / CBS 112.46 / NRRL 194 / M139</strain>
    </source>
</reference>
<reference key="4">
    <citation type="journal article" date="1998" name="J. Bacteriol.">
        <title>Opposite patterns of expression of two Aspergillus nidulans xylanase genes with respect to ambient pH.</title>
        <authorList>
            <person name="MacCabe A.P."/>
            <person name="Orejas M."/>
            <person name="Perez-Gonzalez J.A."/>
            <person name="Ramon D."/>
        </authorList>
    </citation>
    <scope>INDUCTION</scope>
</reference>
<reference key="5">
    <citation type="journal article" date="2001" name="J. Bacteriol.">
        <title>The wide-domain carbon catabolite repressor CreA indirectly controls expression of the Aspergillus nidulans xlnB gene, encoding the acidic endo-beta-(1,4)-xylanase X(24).</title>
        <authorList>
            <person name="Orejas M."/>
            <person name="MacCabe A.P."/>
            <person name="Perez-Gonzalez J.A."/>
            <person name="Kumar S."/>
            <person name="Ramon D."/>
        </authorList>
    </citation>
    <scope>INDUCTION</scope>
</reference>
<reference key="6">
    <citation type="journal article" date="2008" name="Fungal Genet. Biol.">
        <title>CreA mediates repression of the regulatory gene xlnR which controls the production of xylanolytic enzymes in Aspergillus nidulans.</title>
        <authorList>
            <person name="Tamayo E.N."/>
            <person name="Villanueva A."/>
            <person name="Hasper A.A."/>
            <person name="de Graaff L.H."/>
            <person name="Ramon D."/>
            <person name="Orejas M."/>
        </authorList>
    </citation>
    <scope>INDUCTION</scope>
</reference>
<dbReference type="EC" id="3.2.1.8"/>
<dbReference type="EMBL" id="Z49893">
    <property type="protein sequence ID" value="CAA90074.1"/>
    <property type="molecule type" value="Genomic_DNA"/>
</dbReference>
<dbReference type="EMBL" id="AACD01000172">
    <property type="protein sequence ID" value="EAA66432.1"/>
    <property type="molecule type" value="Genomic_DNA"/>
</dbReference>
<dbReference type="EMBL" id="BN001308">
    <property type="protein sequence ID" value="CBF87481.1"/>
    <property type="molecule type" value="Genomic_DNA"/>
</dbReference>
<dbReference type="PIR" id="S57469">
    <property type="entry name" value="S57469"/>
</dbReference>
<dbReference type="RefSeq" id="XP_682634.1">
    <property type="nucleotide sequence ID" value="XM_677542.1"/>
</dbReference>
<dbReference type="SMR" id="P55333"/>
<dbReference type="STRING" id="227321.P55333"/>
<dbReference type="CAZy" id="GH11">
    <property type="family name" value="Glycoside Hydrolase Family 11"/>
</dbReference>
<dbReference type="EnsemblFungi" id="CBF87481">
    <property type="protein sequence ID" value="CBF87481"/>
    <property type="gene ID" value="ANIA_09365"/>
</dbReference>
<dbReference type="KEGG" id="ani:ANIA_09365"/>
<dbReference type="eggNOG" id="ENOG502RXA7">
    <property type="taxonomic scope" value="Eukaryota"/>
</dbReference>
<dbReference type="HOGENOM" id="CLU_052631_0_0_1"/>
<dbReference type="InParanoid" id="P55333"/>
<dbReference type="OMA" id="VDWTNCG"/>
<dbReference type="OrthoDB" id="2115822at2759"/>
<dbReference type="UniPathway" id="UPA00114"/>
<dbReference type="Proteomes" id="UP000000560">
    <property type="component" value="Chromosome VIII"/>
</dbReference>
<dbReference type="GO" id="GO:0005576">
    <property type="term" value="C:extracellular region"/>
    <property type="evidence" value="ECO:0007669"/>
    <property type="project" value="UniProtKB-SubCell"/>
</dbReference>
<dbReference type="GO" id="GO:0031176">
    <property type="term" value="F:endo-1,4-beta-xylanase activity"/>
    <property type="evidence" value="ECO:0007669"/>
    <property type="project" value="UniProtKB-EC"/>
</dbReference>
<dbReference type="GO" id="GO:0045493">
    <property type="term" value="P:xylan catabolic process"/>
    <property type="evidence" value="ECO:0000318"/>
    <property type="project" value="GO_Central"/>
</dbReference>
<dbReference type="FunFam" id="2.60.120.180:FF:000001">
    <property type="entry name" value="Endo-1,4-beta-xylanase"/>
    <property type="match status" value="1"/>
</dbReference>
<dbReference type="Gene3D" id="2.60.120.180">
    <property type="match status" value="1"/>
</dbReference>
<dbReference type="InterPro" id="IPR013320">
    <property type="entry name" value="ConA-like_dom_sf"/>
</dbReference>
<dbReference type="InterPro" id="IPR013319">
    <property type="entry name" value="GH11/12"/>
</dbReference>
<dbReference type="InterPro" id="IPR018208">
    <property type="entry name" value="GH11_AS_1"/>
</dbReference>
<dbReference type="InterPro" id="IPR033119">
    <property type="entry name" value="GH11_AS_2"/>
</dbReference>
<dbReference type="InterPro" id="IPR033123">
    <property type="entry name" value="GH11_dom"/>
</dbReference>
<dbReference type="InterPro" id="IPR001137">
    <property type="entry name" value="Glyco_hydro_11"/>
</dbReference>
<dbReference type="PANTHER" id="PTHR46828">
    <property type="entry name" value="ENDO-1,4-BETA-XYLANASE A-RELATED"/>
    <property type="match status" value="1"/>
</dbReference>
<dbReference type="PANTHER" id="PTHR46828:SF2">
    <property type="entry name" value="ENDO-1,4-BETA-XYLANASE A-RELATED"/>
    <property type="match status" value="1"/>
</dbReference>
<dbReference type="Pfam" id="PF00457">
    <property type="entry name" value="Glyco_hydro_11"/>
    <property type="match status" value="1"/>
</dbReference>
<dbReference type="PRINTS" id="PR00911">
    <property type="entry name" value="GLHYDRLASE11"/>
</dbReference>
<dbReference type="SUPFAM" id="SSF49899">
    <property type="entry name" value="Concanavalin A-like lectins/glucanases"/>
    <property type="match status" value="1"/>
</dbReference>
<dbReference type="PROSITE" id="PS00776">
    <property type="entry name" value="GH11_1"/>
    <property type="match status" value="1"/>
</dbReference>
<dbReference type="PROSITE" id="PS00777">
    <property type="entry name" value="GH11_2"/>
    <property type="match status" value="1"/>
</dbReference>
<dbReference type="PROSITE" id="PS51761">
    <property type="entry name" value="GH11_3"/>
    <property type="match status" value="1"/>
</dbReference>
<evidence type="ECO:0000255" key="1"/>
<evidence type="ECO:0000255" key="2">
    <source>
        <dbReference type="PROSITE-ProRule" id="PRU01097"/>
    </source>
</evidence>
<evidence type="ECO:0000255" key="3">
    <source>
        <dbReference type="PROSITE-ProRule" id="PRU10062"/>
    </source>
</evidence>
<evidence type="ECO:0000255" key="4">
    <source>
        <dbReference type="PROSITE-ProRule" id="PRU10063"/>
    </source>
</evidence>
<evidence type="ECO:0000269" key="5">
    <source>
    </source>
</evidence>
<evidence type="ECO:0000269" key="6">
    <source>
    </source>
</evidence>
<evidence type="ECO:0000269" key="7">
    <source>
    </source>
</evidence>
<evidence type="ECO:0000269" key="8">
    <source>
    </source>
</evidence>
<evidence type="ECO:0000305" key="9"/>
<keyword id="KW-0119">Carbohydrate metabolism</keyword>
<keyword id="KW-0326">Glycosidase</keyword>
<keyword id="KW-0378">Hydrolase</keyword>
<keyword id="KW-0624">Polysaccharide degradation</keyword>
<keyword id="KW-1185">Reference proteome</keyword>
<keyword id="KW-0964">Secreted</keyword>
<keyword id="KW-0732">Signal</keyword>
<keyword id="KW-0858">Xylan degradation</keyword>
<organism>
    <name type="scientific">Emericella nidulans (strain FGSC A4 / ATCC 38163 / CBS 112.46 / NRRL 194 / M139)</name>
    <name type="common">Aspergillus nidulans</name>
    <dbReference type="NCBI Taxonomy" id="227321"/>
    <lineage>
        <taxon>Eukaryota</taxon>
        <taxon>Fungi</taxon>
        <taxon>Dikarya</taxon>
        <taxon>Ascomycota</taxon>
        <taxon>Pezizomycotina</taxon>
        <taxon>Eurotiomycetes</taxon>
        <taxon>Eurotiomycetidae</taxon>
        <taxon>Eurotiales</taxon>
        <taxon>Aspergillaceae</taxon>
        <taxon>Aspergillus</taxon>
        <taxon>Aspergillus subgen. Nidulantes</taxon>
    </lineage>
</organism>
<comment type="function">
    <text evidence="7">Endo-1,4-beta-xylanase involved in the hydrolysis of xylan, a major structural heterogeneous polysaccharide found in plant biomass representing the second most abundant polysaccharide in the biosphere, after cellulose.</text>
</comment>
<comment type="catalytic activity">
    <reaction>
        <text>Endohydrolysis of (1-&gt;4)-beta-D-xylosidic linkages in xylans.</text>
        <dbReference type="EC" id="3.2.1.8"/>
    </reaction>
</comment>
<comment type="pathway">
    <text>Glycan degradation; xylan degradation.</text>
</comment>
<comment type="subcellular location">
    <subcellularLocation>
        <location evidence="7">Secreted</location>
    </subcellularLocation>
</comment>
<comment type="induction">
    <text evidence="5 6 8">Expressed in the presence of D-xylose under conditions of acidic ambient pH, probably under the regulation of the pacC transcription factor. Repressed in presence of glucose through the action of the creA transcription repressor.</text>
</comment>
<comment type="similarity">
    <text evidence="9">Belongs to the glycosyl hydrolase 11 (cellulase G) family.</text>
</comment>